<name>RS11_BARBK</name>
<comment type="function">
    <text evidence="1">Located on the platform of the 30S subunit, it bridges several disparate RNA helices of the 16S rRNA. Forms part of the Shine-Dalgarno cleft in the 70S ribosome.</text>
</comment>
<comment type="subunit">
    <text evidence="1">Part of the 30S ribosomal subunit. Interacts with proteins S7 and S18. Binds to IF-3.</text>
</comment>
<comment type="similarity">
    <text evidence="1">Belongs to the universal ribosomal protein uS11 family.</text>
</comment>
<organism>
    <name type="scientific">Bartonella bacilliformis (strain ATCC 35685 / KC583 / Herrer 020/F12,63)</name>
    <dbReference type="NCBI Taxonomy" id="360095"/>
    <lineage>
        <taxon>Bacteria</taxon>
        <taxon>Pseudomonadati</taxon>
        <taxon>Pseudomonadota</taxon>
        <taxon>Alphaproteobacteria</taxon>
        <taxon>Hyphomicrobiales</taxon>
        <taxon>Bartonellaceae</taxon>
        <taxon>Bartonella</taxon>
    </lineage>
</organism>
<gene>
    <name evidence="1" type="primary">rpsK</name>
    <name type="ordered locus">BARBAKC583_0721</name>
</gene>
<sequence>MAKEAKRVRRSERKNISSSVVHINSTFNNTMITITDSQGDTIAWSSAGAQGFKGSRKSTPFAAQVAAADCAKKAEEHGVRSLEVEVCGPGSGRESALRALQSAGFIITSIRDVTPIPHNGCRPRKRRRV</sequence>
<accession>A1USR7</accession>
<protein>
    <recommendedName>
        <fullName evidence="1">Small ribosomal subunit protein uS11</fullName>
    </recommendedName>
    <alternativeName>
        <fullName evidence="2">30S ribosomal protein S11</fullName>
    </alternativeName>
</protein>
<evidence type="ECO:0000255" key="1">
    <source>
        <dbReference type="HAMAP-Rule" id="MF_01310"/>
    </source>
</evidence>
<evidence type="ECO:0000305" key="2"/>
<feature type="chain" id="PRO_0000294719" description="Small ribosomal subunit protein uS11">
    <location>
        <begin position="1"/>
        <end position="129"/>
    </location>
</feature>
<keyword id="KW-0687">Ribonucleoprotein</keyword>
<keyword id="KW-0689">Ribosomal protein</keyword>
<keyword id="KW-0694">RNA-binding</keyword>
<keyword id="KW-0699">rRNA-binding</keyword>
<reference key="1">
    <citation type="submission" date="2006-12" db="EMBL/GenBank/DDBJ databases">
        <authorList>
            <person name="Hendrix L."/>
            <person name="Mohamoud Y."/>
            <person name="Radune D."/>
            <person name="Shvartsbeyn A."/>
            <person name="Daugherty S."/>
            <person name="Dodson R."/>
            <person name="Durkin A.S."/>
            <person name="Harkins D."/>
            <person name="Huot H."/>
            <person name="Kothari S.P."/>
            <person name="Madupu R."/>
            <person name="Li J."/>
            <person name="Nelson W.C."/>
            <person name="Shrivastava S."/>
            <person name="Giglio M.G."/>
            <person name="Haft D."/>
            <person name="Selengut J."/>
            <person name="Fraser-Ligget C."/>
            <person name="Seshadri R."/>
        </authorList>
    </citation>
    <scope>NUCLEOTIDE SEQUENCE [LARGE SCALE GENOMIC DNA]</scope>
    <source>
        <strain>ATCC 35685 / KC583 / Herrer 020/F12,63</strain>
    </source>
</reference>
<dbReference type="EMBL" id="CP000524">
    <property type="protein sequence ID" value="ABM44968.1"/>
    <property type="molecule type" value="Genomic_DNA"/>
</dbReference>
<dbReference type="RefSeq" id="WP_005766960.1">
    <property type="nucleotide sequence ID" value="NC_008783.1"/>
</dbReference>
<dbReference type="SMR" id="A1USR7"/>
<dbReference type="STRING" id="360095.BARBAKC583_0721"/>
<dbReference type="GeneID" id="4684554"/>
<dbReference type="KEGG" id="bbk:BARBAKC583_0721"/>
<dbReference type="PATRIC" id="fig|360095.6.peg.700"/>
<dbReference type="eggNOG" id="COG0100">
    <property type="taxonomic scope" value="Bacteria"/>
</dbReference>
<dbReference type="HOGENOM" id="CLU_072439_5_0_5"/>
<dbReference type="OrthoDB" id="9806415at2"/>
<dbReference type="Proteomes" id="UP000000643">
    <property type="component" value="Chromosome"/>
</dbReference>
<dbReference type="GO" id="GO:1990904">
    <property type="term" value="C:ribonucleoprotein complex"/>
    <property type="evidence" value="ECO:0007669"/>
    <property type="project" value="UniProtKB-KW"/>
</dbReference>
<dbReference type="GO" id="GO:0005840">
    <property type="term" value="C:ribosome"/>
    <property type="evidence" value="ECO:0007669"/>
    <property type="project" value="UniProtKB-KW"/>
</dbReference>
<dbReference type="GO" id="GO:0019843">
    <property type="term" value="F:rRNA binding"/>
    <property type="evidence" value="ECO:0007669"/>
    <property type="project" value="UniProtKB-UniRule"/>
</dbReference>
<dbReference type="GO" id="GO:0003735">
    <property type="term" value="F:structural constituent of ribosome"/>
    <property type="evidence" value="ECO:0007669"/>
    <property type="project" value="InterPro"/>
</dbReference>
<dbReference type="GO" id="GO:0006412">
    <property type="term" value="P:translation"/>
    <property type="evidence" value="ECO:0007669"/>
    <property type="project" value="UniProtKB-UniRule"/>
</dbReference>
<dbReference type="FunFam" id="3.30.420.80:FF:000001">
    <property type="entry name" value="30S ribosomal protein S11"/>
    <property type="match status" value="1"/>
</dbReference>
<dbReference type="Gene3D" id="3.30.420.80">
    <property type="entry name" value="Ribosomal protein S11"/>
    <property type="match status" value="1"/>
</dbReference>
<dbReference type="HAMAP" id="MF_01310">
    <property type="entry name" value="Ribosomal_uS11"/>
    <property type="match status" value="1"/>
</dbReference>
<dbReference type="InterPro" id="IPR001971">
    <property type="entry name" value="Ribosomal_uS11"/>
</dbReference>
<dbReference type="InterPro" id="IPR019981">
    <property type="entry name" value="Ribosomal_uS11_bac-type"/>
</dbReference>
<dbReference type="InterPro" id="IPR018102">
    <property type="entry name" value="Ribosomal_uS11_CS"/>
</dbReference>
<dbReference type="InterPro" id="IPR036967">
    <property type="entry name" value="Ribosomal_uS11_sf"/>
</dbReference>
<dbReference type="NCBIfam" id="NF003698">
    <property type="entry name" value="PRK05309.1"/>
    <property type="match status" value="1"/>
</dbReference>
<dbReference type="NCBIfam" id="TIGR03632">
    <property type="entry name" value="uS11_bact"/>
    <property type="match status" value="1"/>
</dbReference>
<dbReference type="PANTHER" id="PTHR11759">
    <property type="entry name" value="40S RIBOSOMAL PROTEIN S14/30S RIBOSOMAL PROTEIN S11"/>
    <property type="match status" value="1"/>
</dbReference>
<dbReference type="Pfam" id="PF00411">
    <property type="entry name" value="Ribosomal_S11"/>
    <property type="match status" value="1"/>
</dbReference>
<dbReference type="PIRSF" id="PIRSF002131">
    <property type="entry name" value="Ribosomal_S11"/>
    <property type="match status" value="1"/>
</dbReference>
<dbReference type="SUPFAM" id="SSF53137">
    <property type="entry name" value="Translational machinery components"/>
    <property type="match status" value="1"/>
</dbReference>
<dbReference type="PROSITE" id="PS00054">
    <property type="entry name" value="RIBOSOMAL_S11"/>
    <property type="match status" value="1"/>
</dbReference>
<proteinExistence type="inferred from homology"/>